<protein>
    <recommendedName>
        <fullName>Protein MxiK</fullName>
    </recommendedName>
</protein>
<proteinExistence type="predicted"/>
<feature type="chain" id="PRO_0000096663" description="Protein MxiK">
    <location>
        <begin position="1"/>
        <end position="175"/>
    </location>
</feature>
<comment type="function">
    <text>Necessary for the secretion of IPA invasins.</text>
</comment>
<comment type="sequence caution" evidence="1">
    <conflict type="erroneous initiation">
        <sequence resource="EMBL-CDS" id="AAK18459"/>
    </conflict>
    <text>Extended N-terminus.</text>
</comment>
<accession>P0A227</accession>
<accession>Q06082</accession>
<accession>Q55289</accession>
<accession>Q9AJW1</accession>
<gene>
    <name type="primary">mxiK</name>
    <name type="ordered locus">CP0140</name>
</gene>
<dbReference type="EMBL" id="AL391753">
    <property type="protein sequence ID" value="CAC05815.1"/>
    <property type="molecule type" value="Genomic_DNA"/>
</dbReference>
<dbReference type="EMBL" id="AF348706">
    <property type="protein sequence ID" value="AAK18459.1"/>
    <property type="status" value="ALT_INIT"/>
    <property type="molecule type" value="Genomic_DNA"/>
</dbReference>
<dbReference type="EMBL" id="AF386526">
    <property type="protein sequence ID" value="AAL72327.1"/>
    <property type="molecule type" value="Genomic_DNA"/>
</dbReference>
<dbReference type="EMBL" id="M98390">
    <property type="protein sequence ID" value="AAA26533.1"/>
    <property type="molecule type" value="Genomic_DNA"/>
</dbReference>
<dbReference type="PIR" id="D45271">
    <property type="entry name" value="D45271"/>
</dbReference>
<dbReference type="RefSeq" id="NP_858273.1">
    <property type="nucleotide sequence ID" value="NC_004851.1"/>
</dbReference>
<dbReference type="RefSeq" id="WP_000620627.1">
    <property type="nucleotide sequence ID" value="NZ_WPGS01000043.1"/>
</dbReference>
<dbReference type="RefSeq" id="YP_009062497.1">
    <property type="nucleotide sequence ID" value="NC_024996.1"/>
</dbReference>
<dbReference type="PaxDb" id="198214-CP0140"/>
<dbReference type="GeneID" id="1238030"/>
<dbReference type="KEGG" id="sfl:CP0140"/>
<dbReference type="PATRIC" id="fig|623.157.peg.5374"/>
<dbReference type="HOGENOM" id="CLU_1554232_0_0_6"/>
<dbReference type="Proteomes" id="UP000001006">
    <property type="component" value="Plasmid pCP301"/>
</dbReference>
<dbReference type="InterPro" id="IPR013388">
    <property type="entry name" value="T3SS_OrgA/MxiK"/>
</dbReference>
<dbReference type="NCBIfam" id="TIGR02555">
    <property type="entry name" value="OrgA_MxiK"/>
    <property type="match status" value="1"/>
</dbReference>
<dbReference type="Pfam" id="PF09482">
    <property type="entry name" value="OrgA_MxiK"/>
    <property type="match status" value="1"/>
</dbReference>
<evidence type="ECO:0000305" key="1"/>
<organism>
    <name type="scientific">Shigella flexneri</name>
    <dbReference type="NCBI Taxonomy" id="623"/>
    <lineage>
        <taxon>Bacteria</taxon>
        <taxon>Pseudomonadati</taxon>
        <taxon>Pseudomonadota</taxon>
        <taxon>Gammaproteobacteria</taxon>
        <taxon>Enterobacterales</taxon>
        <taxon>Enterobacteriaceae</taxon>
        <taxon>Shigella</taxon>
    </lineage>
</organism>
<keyword id="KW-0614">Plasmid</keyword>
<keyword id="KW-1185">Reference proteome</keyword>
<keyword id="KW-0843">Virulence</keyword>
<reference key="1">
    <citation type="journal article" date="2000" name="Mol. Microbiol.">
        <title>The virulence plasmid pWR100 and the repertoire of proteins secreted by the type III secretion apparatus of Shigella flexneri.</title>
        <authorList>
            <person name="Buchrieser C."/>
            <person name="Glaser P."/>
            <person name="Rusniok C."/>
            <person name="Nedjari H."/>
            <person name="d'Hauteville H."/>
            <person name="Kunst F."/>
            <person name="Sansonetti P.J."/>
            <person name="Parsot C."/>
        </authorList>
    </citation>
    <scope>NUCLEOTIDE SEQUENCE [GENOMIC DNA]</scope>
    <source>
        <strain>M90T / Serotype 5a</strain>
        <plasmid>pWR100</plasmid>
    </source>
</reference>
<reference key="2">
    <citation type="journal article" date="2001" name="Infect. Immun.">
        <title>Complete DNA sequence and analysis of the large virulence plasmid of Shigella flexneri.</title>
        <authorList>
            <person name="Venkatesan M.M."/>
            <person name="Goldberg M.B."/>
            <person name="Rose D.J."/>
            <person name="Grotbeck E.J."/>
            <person name="Burland V."/>
            <person name="Blattner F.R."/>
        </authorList>
    </citation>
    <scope>NUCLEOTIDE SEQUENCE [GENOMIC DNA]</scope>
    <source>
        <strain>M90T / Serotype 5a</strain>
        <plasmid>pWR501</plasmid>
    </source>
</reference>
<reference key="3">
    <citation type="journal article" date="2002" name="Nucleic Acids Res.">
        <title>Genome sequence of Shigella flexneri 2a: insights into pathogenicity through comparison with genomes of Escherichia coli K12 and O157.</title>
        <authorList>
            <person name="Jin Q."/>
            <person name="Yuan Z."/>
            <person name="Xu J."/>
            <person name="Wang Y."/>
            <person name="Shen Y."/>
            <person name="Lu W."/>
            <person name="Wang J."/>
            <person name="Liu H."/>
            <person name="Yang J."/>
            <person name="Yang F."/>
            <person name="Zhang X."/>
            <person name="Zhang J."/>
            <person name="Yang G."/>
            <person name="Wu H."/>
            <person name="Qu D."/>
            <person name="Dong J."/>
            <person name="Sun L."/>
            <person name="Xue Y."/>
            <person name="Zhao A."/>
            <person name="Gao Y."/>
            <person name="Zhu J."/>
            <person name="Kan B."/>
            <person name="Ding K."/>
            <person name="Chen S."/>
            <person name="Cheng H."/>
            <person name="Yao Z."/>
            <person name="He B."/>
            <person name="Chen R."/>
            <person name="Ma D."/>
            <person name="Qiang B."/>
            <person name="Wen Y."/>
            <person name="Hou Y."/>
            <person name="Yu J."/>
        </authorList>
    </citation>
    <scope>NUCLEOTIDE SEQUENCE [LARGE SCALE GENOMIC DNA]</scope>
    <source>
        <strain>301 / Serotype 2a</strain>
        <plasmid>pCP301</plasmid>
    </source>
</reference>
<reference key="4">
    <citation type="journal article" date="1992" name="J. Bacteriol.">
        <title>MxiJ, a lipoprotein involved in secretion of Shigella Ipa invasins, is homologous to YscJ, a secretion factor of the Yersinia Yop proteins.</title>
        <authorList>
            <person name="Allaoui A."/>
            <person name="Sansonetti P.J."/>
            <person name="Parsot C."/>
        </authorList>
    </citation>
    <scope>NUCLEOTIDE SEQUENCE [GENOMIC DNA] OF 1-76</scope>
    <source>
        <strain>M90T / Serotype 5a</strain>
        <plasmid>pWR100</plasmid>
    </source>
</reference>
<name>MXIK_SHIFL</name>
<geneLocation type="plasmid">
    <name>pWR100</name>
</geneLocation>
<geneLocation type="plasmid">
    <name>pWR501</name>
</geneLocation>
<geneLocation type="plasmid">
    <name>pCP301</name>
</geneLocation>
<sequence>MIRMDGIYKKYLSIIFDPAFYINRNRLNLPSELLENGVIRSEINNLIINKYDLNCDIEPLSGVTAMFVANWNLLPAVAYFIGSQESRLINHSEMVISYYGGKISKQGEAAIRSGFWHLIAWKENISVGIYERINLLFNPIALEGNYTPVERNLSRLNEGMQYAKRHFTGIQTSCL</sequence>